<protein>
    <recommendedName>
        <fullName>Non-structural protein V</fullName>
    </recommendedName>
</protein>
<reference key="1">
    <citation type="journal article" date="1992" name="J. Gen. Virol.">
        <title>The genes encoding the phospho- and matrix proteins of phocine distemper virus.</title>
        <authorList>
            <person name="Curran M.D."/>
            <person name="Rima B.K."/>
        </authorList>
    </citation>
    <scope>NUCLEOTIDE SEQUENCE</scope>
    <source>
        <strain>Ulster/88</strain>
    </source>
</reference>
<reference key="2">
    <citation type="submission" date="1992-04" db="EMBL/GenBank/DDBJ databases">
        <authorList>
            <person name="Barrett T."/>
            <person name="Goatley L.G."/>
            <person name="Haas L."/>
        </authorList>
    </citation>
    <scope>NUCLEOTIDE SEQUENCE</scope>
    <scope>RNA EDITING</scope>
    <source>
        <strain>2558/Hannover-88</strain>
    </source>
</reference>
<reference key="3">
    <citation type="journal article" date="1992" name="J. Gen. Virol.">
        <title>Sequence analysis of the genes encoding the nucleocapsid protein and phosphoprotein (P) of phocid distemper virus, and editing of the P gene transcript.</title>
        <authorList>
            <person name="Blixenkrone-Moeller M."/>
            <person name="Sharma B."/>
            <person name="Varsanyi T."/>
            <person name="Hu A."/>
            <person name="Norrby E."/>
            <person name="Koevamees J."/>
        </authorList>
    </citation>
    <scope>NUCLEOTIDE SEQUENCE</scope>
    <scope>RNA EDITING</scope>
    <source>
        <strain>Isolate DK88-4A</strain>
    </source>
</reference>
<evidence type="ECO:0000250" key="1"/>
<evidence type="ECO:0000256" key="2">
    <source>
        <dbReference type="SAM" id="MobiDB-lite"/>
    </source>
</evidence>
<evidence type="ECO:0000269" key="3">
    <source>
    </source>
</evidence>
<evidence type="ECO:0000269" key="4">
    <source ref="2"/>
</evidence>
<evidence type="ECO:0000305" key="5"/>
<gene>
    <name type="primary">P/V</name>
</gene>
<accession>P35941</accession>
<sequence>MAEEQAYHVSKGLECIKALRENPPNMEEIQEVSNIRDQTYKSSKESGTTGVQEEEITQNIDESHTPTKRSNSVSDVLQEDQRGREDNTAPVEAKDRIEEDTQTGPAVRRYYVYDHCGEKVKGIEDADSLMVPAGPPSNRGFEGREGSLDDSIEDSSEDYSEGNASSNWGYTFGLNPDRAADVSMLMEEELTALLGTGHNAGGQKRDGRTLQFPNSPEGSIGNQACEPIKKGHRREVSLTWNDDRCWIDKWCNPICTQVNWGVIRAKCICGECPPVCDDCKDDPEMQNRIWYETPTRETK</sequence>
<keyword id="KW-0945">Host-virus interaction</keyword>
<keyword id="KW-1090">Inhibition of host innate immune response by virus</keyword>
<keyword id="KW-1114">Inhibition of host interferon signaling pathway by virus</keyword>
<keyword id="KW-1089">Inhibition of host MDA5 by virus</keyword>
<keyword id="KW-1113">Inhibition of host RLR pathway by virus</keyword>
<keyword id="KW-1105">Inhibition of host STAT1 by virus</keyword>
<keyword id="KW-1106">Inhibition of host STAT2 by virus</keyword>
<keyword id="KW-0922">Interferon antiviral system evasion</keyword>
<keyword id="KW-0479">Metal-binding</keyword>
<keyword id="KW-0691">RNA editing</keyword>
<keyword id="KW-0899">Viral immunoevasion</keyword>
<keyword id="KW-0862">Zinc</keyword>
<comment type="function">
    <text evidence="1">Blocks host interferon signaling.</text>
</comment>
<comment type="RNA editing">
    <location>
        <position position="231" evidence="3 4"/>
    </location>
    <text>Partially edited. RNA editing at this position consists of an insertion of one guanine nucleotide. The sequence displayed here is the V protein, derived from the edited RNA. The unedited RNA gives rise to the P protein (AC P35939).</text>
</comment>
<feature type="chain" id="PRO_0000142814" description="Non-structural protein V">
    <location>
        <begin position="1"/>
        <end position="299"/>
    </location>
</feature>
<feature type="region of interest" description="Disordered" evidence="2">
    <location>
        <begin position="30"/>
        <end position="101"/>
    </location>
</feature>
<feature type="region of interest" description="Disordered" evidence="2">
    <location>
        <begin position="128"/>
        <end position="163"/>
    </location>
</feature>
<feature type="compositionally biased region" description="Basic and acidic residues" evidence="2">
    <location>
        <begin position="79"/>
        <end position="99"/>
    </location>
</feature>
<feature type="compositionally biased region" description="Acidic residues" evidence="2">
    <location>
        <begin position="148"/>
        <end position="160"/>
    </location>
</feature>
<feature type="binding site" evidence="1">
    <location>
        <position position="232"/>
    </location>
    <ligand>
        <name>Zn(2+)</name>
        <dbReference type="ChEBI" id="CHEBI:29105"/>
        <label>1</label>
    </ligand>
</feature>
<feature type="binding site" evidence="1">
    <location>
        <position position="251"/>
    </location>
    <ligand>
        <name>Zn(2+)</name>
        <dbReference type="ChEBI" id="CHEBI:29105"/>
        <label>1</label>
    </ligand>
</feature>
<feature type="binding site" evidence="1">
    <location>
        <position position="255"/>
    </location>
    <ligand>
        <name>Zn(2+)</name>
        <dbReference type="ChEBI" id="CHEBI:29105"/>
        <label>2</label>
    </ligand>
</feature>
<feature type="binding site" evidence="1">
    <location>
        <position position="267"/>
    </location>
    <ligand>
        <name>Zn(2+)</name>
        <dbReference type="ChEBI" id="CHEBI:29105"/>
        <label>2</label>
    </ligand>
</feature>
<feature type="binding site" evidence="1">
    <location>
        <position position="269"/>
    </location>
    <ligand>
        <name>Zn(2+)</name>
        <dbReference type="ChEBI" id="CHEBI:29105"/>
        <label>2</label>
    </ligand>
</feature>
<feature type="binding site" evidence="1">
    <location>
        <position position="272"/>
    </location>
    <ligand>
        <name>Zn(2+)</name>
        <dbReference type="ChEBI" id="CHEBI:29105"/>
        <label>2</label>
    </ligand>
</feature>
<feature type="binding site" evidence="1">
    <location>
        <position position="276"/>
    </location>
    <ligand>
        <name>Zn(2+)</name>
        <dbReference type="ChEBI" id="CHEBI:29105"/>
        <label>1</label>
    </ligand>
</feature>
<feature type="binding site" evidence="1">
    <location>
        <position position="279"/>
    </location>
    <ligand>
        <name>Zn(2+)</name>
        <dbReference type="ChEBI" id="CHEBI:29105"/>
        <label>1</label>
    </ligand>
</feature>
<feature type="sequence conflict" description="In Ref. 3." evidence="5" ref="3">
    <original>A</original>
    <variation>T</variation>
    <location>
        <position position="192"/>
    </location>
</feature>
<feature type="sequence conflict" description="In Ref. 3." evidence="5" ref="3">
    <original>A</original>
    <variation>V</variation>
    <location>
        <position position="224"/>
    </location>
</feature>
<organismHost>
    <name type="scientific">Phocidae</name>
    <name type="common">true seals</name>
    <dbReference type="NCBI Taxonomy" id="9709"/>
</organismHost>
<dbReference type="EMBL" id="D10371">
    <property type="status" value="NOT_ANNOTATED_CDS"/>
    <property type="molecule type" value="Genomic_RNA"/>
</dbReference>
<dbReference type="EMBL" id="X65512">
    <property type="protein sequence ID" value="CAA46485.1"/>
    <property type="molecule type" value="mRNA"/>
</dbReference>
<dbReference type="EMBL" id="X75960">
    <property type="status" value="NOT_ANNOTATED_CDS"/>
    <property type="molecule type" value="Genomic_RNA"/>
</dbReference>
<dbReference type="PIR" id="JQ1565">
    <property type="entry name" value="JQ1565"/>
</dbReference>
<dbReference type="PIR" id="JQ1610">
    <property type="entry name" value="JQ1610"/>
</dbReference>
<dbReference type="SMR" id="P35941"/>
<dbReference type="OrthoDB" id="10126at10239"/>
<dbReference type="GO" id="GO:0046872">
    <property type="term" value="F:metal ion binding"/>
    <property type="evidence" value="ECO:0007669"/>
    <property type="project" value="UniProtKB-KW"/>
</dbReference>
<dbReference type="GO" id="GO:0039554">
    <property type="term" value="P:symbiont-mediated suppression of host cytoplasmic pattern recognition receptor signaling pathway via inhibition of MDA-5 activity"/>
    <property type="evidence" value="ECO:0007669"/>
    <property type="project" value="UniProtKB-KW"/>
</dbReference>
<dbReference type="GO" id="GO:0039563">
    <property type="term" value="P:symbiont-mediated suppression of host JAK-STAT cascade via inhibition of STAT1 activity"/>
    <property type="evidence" value="ECO:0007669"/>
    <property type="project" value="UniProtKB-KW"/>
</dbReference>
<dbReference type="GO" id="GO:0039564">
    <property type="term" value="P:symbiont-mediated suppression of host JAK-STAT cascade via inhibition of STAT2 activity"/>
    <property type="evidence" value="ECO:0007669"/>
    <property type="project" value="UniProtKB-KW"/>
</dbReference>
<dbReference type="GO" id="GO:0039502">
    <property type="term" value="P:symbiont-mediated suppression of host type I interferon-mediated signaling pathway"/>
    <property type="evidence" value="ECO:0007669"/>
    <property type="project" value="UniProtKB-KW"/>
</dbReference>
<dbReference type="Gene3D" id="4.10.80.340">
    <property type="match status" value="1"/>
</dbReference>
<dbReference type="InterPro" id="IPR024279">
    <property type="entry name" value="Paramyx_V_Zn-bd"/>
</dbReference>
<dbReference type="InterPro" id="IPR028243">
    <property type="entry name" value="Paramyxo_P/V_N"/>
</dbReference>
<dbReference type="Pfam" id="PF13825">
    <property type="entry name" value="Paramyxo_P_V_N"/>
    <property type="match status" value="1"/>
</dbReference>
<dbReference type="Pfam" id="PF13008">
    <property type="entry name" value="zf-Paramyx-P"/>
    <property type="match status" value="1"/>
</dbReference>
<organism>
    <name type="scientific">Phocine distemper virus</name>
    <name type="common">PDV</name>
    <dbReference type="NCBI Taxonomy" id="11240"/>
    <lineage>
        <taxon>Viruses</taxon>
        <taxon>Riboviria</taxon>
        <taxon>Orthornavirae</taxon>
        <taxon>Negarnaviricota</taxon>
        <taxon>Haploviricotina</taxon>
        <taxon>Monjiviricetes</taxon>
        <taxon>Mononegavirales</taxon>
        <taxon>Paramyxoviridae</taxon>
        <taxon>Orthoparamyxovirinae</taxon>
        <taxon>Morbillivirus</taxon>
        <taxon>Morbillivirus phocae</taxon>
    </lineage>
</organism>
<name>V_PHODV</name>
<proteinExistence type="evidence at transcript level"/>